<reference key="1">
    <citation type="journal article" date="1999" name="Br. J. Pharmacol.">
        <title>Effects of phrixotoxins on the Kv4 family of potassium channels and implications for the role of Ito1 in cardiac electrogenesis.</title>
        <authorList>
            <person name="Diochot S."/>
            <person name="Drici M.-D."/>
            <person name="Moinier D."/>
            <person name="Fink M."/>
            <person name="Lazdunski M."/>
        </authorList>
    </citation>
    <scope>PROTEIN SEQUENCE</scope>
    <scope>FUNCTION</scope>
    <scope>MASS SPECTROMETRY</scope>
    <scope>SUBCELLULAR LOCATION</scope>
</reference>
<reference key="2">
    <citation type="journal article" date="2014" name="J. Med. Chem.">
        <title>Studies examining the relationship between the chemical structure of protoxin II and its activity on voltage gated sodium channels.</title>
        <authorList>
            <person name="Park J.H."/>
            <person name="Carlin K.P."/>
            <person name="Wu G."/>
            <person name="Ilyin V.I."/>
            <person name="Musza L.L."/>
            <person name="Blake P.R."/>
            <person name="Kyle D.J."/>
        </authorList>
    </citation>
    <scope>FUNCTION ON NAV1.7/SCN9A</scope>
    <scope>MUTAGENESIS OF ALA-12; LEU-19 AND 28-ILE-ILE-29</scope>
</reference>
<reference key="3">
    <citation type="journal article" date="2004" name="Protein Sci.">
        <title>Solution structure of Phrixotoxin 1, a specific peptide inhibitor of Kv4 potassium channels from the venom of the theraphosid spider Phrixotrichus auratus.</title>
        <authorList>
            <person name="Chagot B."/>
            <person name="Escoubas P."/>
            <person name="Villegas E."/>
            <person name="Bernard C."/>
            <person name="Ferrat G."/>
            <person name="Corzo G."/>
            <person name="Lazdunski M."/>
            <person name="Darbon H."/>
        </authorList>
    </citation>
    <scope>STRUCTURE BY NMR</scope>
    <scope>SYNTHESIS</scope>
    <scope>DISULFIDE BONDS</scope>
    <scope>AMIDATION AT ILE-29</scope>
</reference>
<organism>
    <name type="scientific">Paraphysa scrofa</name>
    <name type="common">Chilean copper tarantula</name>
    <name type="synonym">Phrixotrichus auratus</name>
    <dbReference type="NCBI Taxonomy" id="269635"/>
    <lineage>
        <taxon>Eukaryota</taxon>
        <taxon>Metazoa</taxon>
        <taxon>Ecdysozoa</taxon>
        <taxon>Arthropoda</taxon>
        <taxon>Chelicerata</taxon>
        <taxon>Arachnida</taxon>
        <taxon>Araneae</taxon>
        <taxon>Mygalomorphae</taxon>
        <taxon>Theraphosidae</taxon>
        <taxon>Paraphysa</taxon>
    </lineage>
</organism>
<feature type="peptide" id="PRO_0000044555" description="Kappa-theraphotoxin-Ps1a" evidence="1">
    <location>
        <begin position="1"/>
        <end position="29"/>
    </location>
</feature>
<feature type="modified residue" description="Isoleucine amide" evidence="2">
    <location>
        <position position="29"/>
    </location>
</feature>
<feature type="disulfide bond" evidence="2 8">
    <location>
        <begin position="2"/>
        <end position="16"/>
    </location>
</feature>
<feature type="disulfide bond" evidence="2 8">
    <location>
        <begin position="9"/>
        <end position="21"/>
    </location>
</feature>
<feature type="disulfide bond" evidence="2 8">
    <location>
        <begin position="15"/>
        <end position="25"/>
    </location>
</feature>
<feature type="mutagenesis site" description="No change in ability to inhibit Nav1.7/SCN9A, and gain of ability to inhibit Nav1.2/SCN2A (IC(50)=919 nM); when associated with M-19." evidence="3">
    <original>A</original>
    <variation>E</variation>
    <location>
        <position position="12"/>
    </location>
</feature>
<feature type="mutagenesis site" description="No change in ability to inhibit Nav1.7/SCN9A, and gain of ability to inhibit Nav1.2/SCN2A (IC(50)=919 nM); when associated with E-12." evidence="3">
    <original>L</original>
    <variation>M</variation>
    <location>
        <position position="19"/>
    </location>
</feature>
<feature type="mutagenesis site" description="400-fold increase in ability to inhibit Nav1.7/SCN9A; and important gain of ability to inhibit Nav1.2/SCN2A (IC(50)=24 nM)." evidence="3">
    <original>II</original>
    <variation>KLW</variation>
    <location>
        <begin position="28"/>
        <end position="29"/>
    </location>
</feature>
<feature type="strand" evidence="9">
    <location>
        <begin position="20"/>
        <end position="26"/>
    </location>
</feature>
<dbReference type="PDB" id="1V7F">
    <property type="method" value="NMR"/>
    <property type="chains" value="A=1-29"/>
</dbReference>
<dbReference type="PDBsum" id="1V7F"/>
<dbReference type="SMR" id="P61230"/>
<dbReference type="ArachnoServer" id="AS000399">
    <property type="toxin name" value="kappa-theraphotoxin-Ps1a"/>
</dbReference>
<dbReference type="EvolutionaryTrace" id="P61230"/>
<dbReference type="GO" id="GO:0005576">
    <property type="term" value="C:extracellular region"/>
    <property type="evidence" value="ECO:0007669"/>
    <property type="project" value="UniProtKB-SubCell"/>
</dbReference>
<dbReference type="GO" id="GO:0008200">
    <property type="term" value="F:ion channel inhibitor activity"/>
    <property type="evidence" value="ECO:0007669"/>
    <property type="project" value="InterPro"/>
</dbReference>
<dbReference type="GO" id="GO:0015459">
    <property type="term" value="F:potassium channel regulator activity"/>
    <property type="evidence" value="ECO:0007669"/>
    <property type="project" value="UniProtKB-KW"/>
</dbReference>
<dbReference type="GO" id="GO:0090729">
    <property type="term" value="F:toxin activity"/>
    <property type="evidence" value="ECO:0007669"/>
    <property type="project" value="UniProtKB-KW"/>
</dbReference>
<dbReference type="InterPro" id="IPR011696">
    <property type="entry name" value="Huwentoxin-1"/>
</dbReference>
<dbReference type="Pfam" id="PF07740">
    <property type="entry name" value="Toxin_12"/>
    <property type="match status" value="1"/>
</dbReference>
<dbReference type="SUPFAM" id="SSF57059">
    <property type="entry name" value="omega toxin-like"/>
    <property type="match status" value="1"/>
</dbReference>
<protein>
    <recommendedName>
        <fullName evidence="6">Kappa-theraphotoxin-Ps1a</fullName>
        <shortName evidence="6">Kappa-TRTX-Ps1a</shortName>
    </recommendedName>
    <alternativeName>
        <fullName evidence="4 5">PaTx1</fullName>
    </alternativeName>
    <alternativeName>
        <fullName evidence="4 5">Phrixotoxin-1</fullName>
    </alternativeName>
</protein>
<accession>P61230</accession>
<sequence length="29" mass="3555">YCQKWMWTCDSARKCCEGLVCRLWCKKII</sequence>
<name>TXP1_PARSR</name>
<evidence type="ECO:0000269" key="1">
    <source>
    </source>
</evidence>
<evidence type="ECO:0000269" key="2">
    <source>
    </source>
</evidence>
<evidence type="ECO:0000269" key="3">
    <source>
    </source>
</evidence>
<evidence type="ECO:0000303" key="4">
    <source>
    </source>
</evidence>
<evidence type="ECO:0000303" key="5">
    <source>
    </source>
</evidence>
<evidence type="ECO:0000305" key="6"/>
<evidence type="ECO:0000305" key="7">
    <source>
    </source>
</evidence>
<evidence type="ECO:0007744" key="8">
    <source>
        <dbReference type="PDB" id="1V7F"/>
    </source>
</evidence>
<evidence type="ECO:0007829" key="9">
    <source>
        <dbReference type="PDB" id="1V7F"/>
    </source>
</evidence>
<comment type="function">
    <text evidence="1 3">Potent and specific blocker of Kv4.2/KCND2 (IC(50)=5 nM) and Kv4.3/KCND3 (IC(50)=28 nM) potassium channels (PubMed:10051143). Acts by altering the gating properties of these channels (PubMed:10051143). Also shows moderate inhibition on human voltage-gated sodium channel Nav1.7/SCN9A activation (IC(50)=423 nM) (PubMed:25026046).</text>
</comment>
<comment type="subcellular location">
    <subcellularLocation>
        <location evidence="1">Secreted</location>
    </subcellularLocation>
</comment>
<comment type="tissue specificity">
    <text evidence="7">Expressed by the venom gland.</text>
</comment>
<comment type="domain">
    <text evidence="2">The presence of a 'disulfide through disulfide knot' structurally defines this protein as a knottin.</text>
</comment>
<comment type="mass spectrometry" mass="3547.6" method="Electrospray" evidence="1"/>
<comment type="miscellaneous">
    <text evidence="1 3">Negative results: does not inhibit Kv1/KCNA, Kv2/KCNB, Kv3/KCNC, and Kv11/KCNH channels (PubMed:10051143). It weakly blocks the neuronal TTX-sensitive sodium currents of neuroblastoma cells (13% inhibition at 100 nM) (PubMed:10051143). Does not inhibit sodium channel Nav1.2/SCN2A (PubMed:25026046).</text>
</comment>
<comment type="similarity">
    <text evidence="6">Belongs to the neurotoxin 30 (phrixotoxin) family.</text>
</comment>
<keyword id="KW-0002">3D-structure</keyword>
<keyword id="KW-0027">Amidation</keyword>
<keyword id="KW-0903">Direct protein sequencing</keyword>
<keyword id="KW-1015">Disulfide bond</keyword>
<keyword id="KW-0872">Ion channel impairing toxin</keyword>
<keyword id="KW-0960">Knottin</keyword>
<keyword id="KW-0528">Neurotoxin</keyword>
<keyword id="KW-0632">Potassium channel impairing toxin</keyword>
<keyword id="KW-0964">Secreted</keyword>
<keyword id="KW-0800">Toxin</keyword>
<keyword id="KW-1220">Voltage-gated potassium channel impairing toxin</keyword>
<proteinExistence type="evidence at protein level"/>